<proteinExistence type="inferred from homology"/>
<protein>
    <recommendedName>
        <fullName evidence="1">Phenylalanine--tRNA ligase beta subunit</fullName>
        <ecNumber evidence="1">6.1.1.20</ecNumber>
    </recommendedName>
    <alternativeName>
        <fullName evidence="1">Phenylalanyl-tRNA synthetase beta subunit</fullName>
        <shortName evidence="1">PheRS</shortName>
    </alternativeName>
</protein>
<name>SYFB_STRP3</name>
<comment type="catalytic activity">
    <reaction evidence="1">
        <text>tRNA(Phe) + L-phenylalanine + ATP = L-phenylalanyl-tRNA(Phe) + AMP + diphosphate + H(+)</text>
        <dbReference type="Rhea" id="RHEA:19413"/>
        <dbReference type="Rhea" id="RHEA-COMP:9668"/>
        <dbReference type="Rhea" id="RHEA-COMP:9699"/>
        <dbReference type="ChEBI" id="CHEBI:15378"/>
        <dbReference type="ChEBI" id="CHEBI:30616"/>
        <dbReference type="ChEBI" id="CHEBI:33019"/>
        <dbReference type="ChEBI" id="CHEBI:58095"/>
        <dbReference type="ChEBI" id="CHEBI:78442"/>
        <dbReference type="ChEBI" id="CHEBI:78531"/>
        <dbReference type="ChEBI" id="CHEBI:456215"/>
        <dbReference type="EC" id="6.1.1.20"/>
    </reaction>
</comment>
<comment type="cofactor">
    <cofactor evidence="1">
        <name>Mg(2+)</name>
        <dbReference type="ChEBI" id="CHEBI:18420"/>
    </cofactor>
    <text evidence="1">Binds 2 magnesium ions per tetramer.</text>
</comment>
<comment type="subunit">
    <text evidence="1">Tetramer of two alpha and two beta subunits.</text>
</comment>
<comment type="subcellular location">
    <subcellularLocation>
        <location>Cytoplasm</location>
    </subcellularLocation>
</comment>
<comment type="similarity">
    <text evidence="1">Belongs to the phenylalanyl-tRNA synthetase beta subunit family. Type 1 subfamily.</text>
</comment>
<comment type="sequence caution" evidence="2">
    <conflict type="erroneous initiation">
        <sequence resource="EMBL-CDS" id="AAM79114"/>
    </conflict>
</comment>
<organism>
    <name type="scientific">Streptococcus pyogenes serotype M3 (strain ATCC BAA-595 / MGAS315)</name>
    <dbReference type="NCBI Taxonomy" id="198466"/>
    <lineage>
        <taxon>Bacteria</taxon>
        <taxon>Bacillati</taxon>
        <taxon>Bacillota</taxon>
        <taxon>Bacilli</taxon>
        <taxon>Lactobacillales</taxon>
        <taxon>Streptococcaceae</taxon>
        <taxon>Streptococcus</taxon>
    </lineage>
</organism>
<dbReference type="EC" id="6.1.1.20" evidence="1"/>
<dbReference type="EMBL" id="AE014074">
    <property type="protein sequence ID" value="AAM79114.1"/>
    <property type="status" value="ALT_INIT"/>
    <property type="molecule type" value="Genomic_DNA"/>
</dbReference>
<dbReference type="RefSeq" id="WP_011106836.1">
    <property type="nucleotide sequence ID" value="NC_004070.1"/>
</dbReference>
<dbReference type="SMR" id="P0DG52"/>
<dbReference type="KEGG" id="spg:SpyM3_0507"/>
<dbReference type="HOGENOM" id="CLU_016891_0_0_9"/>
<dbReference type="Proteomes" id="UP000000564">
    <property type="component" value="Chromosome"/>
</dbReference>
<dbReference type="GO" id="GO:0009328">
    <property type="term" value="C:phenylalanine-tRNA ligase complex"/>
    <property type="evidence" value="ECO:0007669"/>
    <property type="project" value="TreeGrafter"/>
</dbReference>
<dbReference type="GO" id="GO:0005524">
    <property type="term" value="F:ATP binding"/>
    <property type="evidence" value="ECO:0007669"/>
    <property type="project" value="UniProtKB-UniRule"/>
</dbReference>
<dbReference type="GO" id="GO:0140096">
    <property type="term" value="F:catalytic activity, acting on a protein"/>
    <property type="evidence" value="ECO:0007669"/>
    <property type="project" value="UniProtKB-ARBA"/>
</dbReference>
<dbReference type="GO" id="GO:0000287">
    <property type="term" value="F:magnesium ion binding"/>
    <property type="evidence" value="ECO:0007669"/>
    <property type="project" value="UniProtKB-UniRule"/>
</dbReference>
<dbReference type="GO" id="GO:0004826">
    <property type="term" value="F:phenylalanine-tRNA ligase activity"/>
    <property type="evidence" value="ECO:0007669"/>
    <property type="project" value="UniProtKB-UniRule"/>
</dbReference>
<dbReference type="GO" id="GO:0016740">
    <property type="term" value="F:transferase activity"/>
    <property type="evidence" value="ECO:0007669"/>
    <property type="project" value="UniProtKB-ARBA"/>
</dbReference>
<dbReference type="GO" id="GO:0000049">
    <property type="term" value="F:tRNA binding"/>
    <property type="evidence" value="ECO:0007669"/>
    <property type="project" value="UniProtKB-KW"/>
</dbReference>
<dbReference type="GO" id="GO:0006432">
    <property type="term" value="P:phenylalanyl-tRNA aminoacylation"/>
    <property type="evidence" value="ECO:0007669"/>
    <property type="project" value="UniProtKB-UniRule"/>
</dbReference>
<dbReference type="CDD" id="cd00769">
    <property type="entry name" value="PheRS_beta_core"/>
    <property type="match status" value="1"/>
</dbReference>
<dbReference type="CDD" id="cd02796">
    <property type="entry name" value="tRNA_bind_bactPheRS"/>
    <property type="match status" value="1"/>
</dbReference>
<dbReference type="FunFam" id="2.40.50.140:FF:000045">
    <property type="entry name" value="Phenylalanine--tRNA ligase beta subunit"/>
    <property type="match status" value="1"/>
</dbReference>
<dbReference type="FunFam" id="3.30.56.10:FF:000002">
    <property type="entry name" value="Phenylalanine--tRNA ligase beta subunit"/>
    <property type="match status" value="1"/>
</dbReference>
<dbReference type="FunFam" id="3.30.70.380:FF:000001">
    <property type="entry name" value="Phenylalanine--tRNA ligase beta subunit"/>
    <property type="match status" value="1"/>
</dbReference>
<dbReference type="FunFam" id="3.30.930.10:FF:000022">
    <property type="entry name" value="Phenylalanine--tRNA ligase beta subunit"/>
    <property type="match status" value="1"/>
</dbReference>
<dbReference type="FunFam" id="3.50.40.10:FF:000001">
    <property type="entry name" value="Phenylalanine--tRNA ligase beta subunit"/>
    <property type="match status" value="1"/>
</dbReference>
<dbReference type="Gene3D" id="3.30.56.10">
    <property type="match status" value="2"/>
</dbReference>
<dbReference type="Gene3D" id="3.30.930.10">
    <property type="entry name" value="Bira Bifunctional Protein, Domain 2"/>
    <property type="match status" value="1"/>
</dbReference>
<dbReference type="Gene3D" id="3.30.70.380">
    <property type="entry name" value="Ferrodoxin-fold anticodon-binding domain"/>
    <property type="match status" value="1"/>
</dbReference>
<dbReference type="Gene3D" id="2.40.50.140">
    <property type="entry name" value="Nucleic acid-binding proteins"/>
    <property type="match status" value="1"/>
</dbReference>
<dbReference type="Gene3D" id="3.50.40.10">
    <property type="entry name" value="Phenylalanyl-trna Synthetase, Chain B, domain 3"/>
    <property type="match status" value="1"/>
</dbReference>
<dbReference type="HAMAP" id="MF_00283">
    <property type="entry name" value="Phe_tRNA_synth_beta1"/>
    <property type="match status" value="1"/>
</dbReference>
<dbReference type="InterPro" id="IPR045864">
    <property type="entry name" value="aa-tRNA-synth_II/BPL/LPL"/>
</dbReference>
<dbReference type="InterPro" id="IPR005146">
    <property type="entry name" value="B3/B4_tRNA-bd"/>
</dbReference>
<dbReference type="InterPro" id="IPR009061">
    <property type="entry name" value="DNA-bd_dom_put_sf"/>
</dbReference>
<dbReference type="InterPro" id="IPR005121">
    <property type="entry name" value="Fdx_antiC-bd"/>
</dbReference>
<dbReference type="InterPro" id="IPR036690">
    <property type="entry name" value="Fdx_antiC-bd_sf"/>
</dbReference>
<dbReference type="InterPro" id="IPR012340">
    <property type="entry name" value="NA-bd_OB-fold"/>
</dbReference>
<dbReference type="InterPro" id="IPR045060">
    <property type="entry name" value="Phe-tRNA-ligase_IIc_bsu"/>
</dbReference>
<dbReference type="InterPro" id="IPR004532">
    <property type="entry name" value="Phe-tRNA-ligase_IIc_bsu_bact"/>
</dbReference>
<dbReference type="InterPro" id="IPR020825">
    <property type="entry name" value="Phe-tRNA_synthase-like_B3/B4"/>
</dbReference>
<dbReference type="InterPro" id="IPR041616">
    <property type="entry name" value="PheRS_beta_core"/>
</dbReference>
<dbReference type="InterPro" id="IPR002547">
    <property type="entry name" value="tRNA-bd_dom"/>
</dbReference>
<dbReference type="InterPro" id="IPR033714">
    <property type="entry name" value="tRNA_bind_bactPheRS"/>
</dbReference>
<dbReference type="InterPro" id="IPR005147">
    <property type="entry name" value="tRNA_synthase_B5-dom"/>
</dbReference>
<dbReference type="NCBIfam" id="TIGR00472">
    <property type="entry name" value="pheT_bact"/>
    <property type="match status" value="1"/>
</dbReference>
<dbReference type="NCBIfam" id="NF045760">
    <property type="entry name" value="YtpR"/>
    <property type="match status" value="1"/>
</dbReference>
<dbReference type="PANTHER" id="PTHR10947:SF0">
    <property type="entry name" value="PHENYLALANINE--TRNA LIGASE BETA SUBUNIT"/>
    <property type="match status" value="1"/>
</dbReference>
<dbReference type="PANTHER" id="PTHR10947">
    <property type="entry name" value="PHENYLALANYL-TRNA SYNTHETASE BETA CHAIN AND LEUCINE-RICH REPEAT-CONTAINING PROTEIN 47"/>
    <property type="match status" value="1"/>
</dbReference>
<dbReference type="Pfam" id="PF03483">
    <property type="entry name" value="B3_4"/>
    <property type="match status" value="1"/>
</dbReference>
<dbReference type="Pfam" id="PF03484">
    <property type="entry name" value="B5"/>
    <property type="match status" value="1"/>
</dbReference>
<dbReference type="Pfam" id="PF03147">
    <property type="entry name" value="FDX-ACB"/>
    <property type="match status" value="1"/>
</dbReference>
<dbReference type="Pfam" id="PF01588">
    <property type="entry name" value="tRNA_bind"/>
    <property type="match status" value="1"/>
</dbReference>
<dbReference type="Pfam" id="PF17759">
    <property type="entry name" value="tRNA_synthFbeta"/>
    <property type="match status" value="1"/>
</dbReference>
<dbReference type="SMART" id="SM00873">
    <property type="entry name" value="B3_4"/>
    <property type="match status" value="1"/>
</dbReference>
<dbReference type="SMART" id="SM00874">
    <property type="entry name" value="B5"/>
    <property type="match status" value="1"/>
</dbReference>
<dbReference type="SMART" id="SM00896">
    <property type="entry name" value="FDX-ACB"/>
    <property type="match status" value="1"/>
</dbReference>
<dbReference type="SUPFAM" id="SSF54991">
    <property type="entry name" value="Anticodon-binding domain of PheRS"/>
    <property type="match status" value="1"/>
</dbReference>
<dbReference type="SUPFAM" id="SSF55681">
    <property type="entry name" value="Class II aaRS and biotin synthetases"/>
    <property type="match status" value="1"/>
</dbReference>
<dbReference type="SUPFAM" id="SSF50249">
    <property type="entry name" value="Nucleic acid-binding proteins"/>
    <property type="match status" value="1"/>
</dbReference>
<dbReference type="SUPFAM" id="SSF56037">
    <property type="entry name" value="PheT/TilS domain"/>
    <property type="match status" value="1"/>
</dbReference>
<dbReference type="SUPFAM" id="SSF46955">
    <property type="entry name" value="Putative DNA-binding domain"/>
    <property type="match status" value="1"/>
</dbReference>
<dbReference type="PROSITE" id="PS51483">
    <property type="entry name" value="B5"/>
    <property type="match status" value="1"/>
</dbReference>
<dbReference type="PROSITE" id="PS51447">
    <property type="entry name" value="FDX_ACB"/>
    <property type="match status" value="1"/>
</dbReference>
<dbReference type="PROSITE" id="PS50886">
    <property type="entry name" value="TRBD"/>
    <property type="match status" value="1"/>
</dbReference>
<sequence length="801" mass="87537">MLVSYKWLKELVDIDVTPAALAEKMSTTGIEVEGIEVPAEGLSKLVVGHVLSCEDVPETHLHLCQVDTGDETPRQIVCGAPNVKAGIKVIVAVPGARIADNYKIKKGKIRGMESLGMICSLQELGLSDSIIPKEFSDGIQILPDEAVPGDAIFKYLDLDDHIIELSITPNRADALSMRGVAHEVAAIYGKSVSFPEKNLQESDKATSEAIEVAIASDNVLTYASRVVENVKVKPSPQWLQNLLMNAGIRPINNVVDVTNYVLLYFGQPMHAFDYDKFEDHKIVTRAARQGESLVTLDGEKRELTTEDLVITVADKPVALAGVMGGQATEIDANSQTVVLEAAVFDGKSIRKTSGRLNLRSESSSRFEKGVNYATVLEALDFAAAMLQELAEGQVLSGHVQAGQLSTEPVEVSTNLDYVNVRLGTELTFADIQRIFNQLGFGLTGDETRFTVAVPRRRWDISIPADLVEEIARIYGYDKLPTTLPEAGGTAAELTPTQALRRKVRGLAEGLGLTEIISYALTTPEKAIEFAVAPSHLTELMWPMSVERSALRQNMVSGMLDTVAYNVARKQSNLALYEIGKIFEQEVNPKEDLPNEVNHFAFTICGLVAQKDFQTQAQAVDFYHAKGILDTLFANLNLKVQYVPTKDLANMHPGRTALILLDEQVIGFVGQVHPGTAKAYSIPETYVAELDMAALEAALPSDQTFAEITKFPAMTRDIALLLDREVSHQAIVTAIESAGVKRLTKIKLFDVYEGATIQAGKKSMAYSLTFQNPNDNLTDEEVAKYMEKITKALTEQVGAEVR</sequence>
<keyword id="KW-0030">Aminoacyl-tRNA synthetase</keyword>
<keyword id="KW-0067">ATP-binding</keyword>
<keyword id="KW-0963">Cytoplasm</keyword>
<keyword id="KW-0436">Ligase</keyword>
<keyword id="KW-0460">Magnesium</keyword>
<keyword id="KW-0479">Metal-binding</keyword>
<keyword id="KW-0547">Nucleotide-binding</keyword>
<keyword id="KW-0648">Protein biosynthesis</keyword>
<keyword id="KW-0694">RNA-binding</keyword>
<keyword id="KW-0820">tRNA-binding</keyword>
<reference key="1">
    <citation type="journal article" date="2002" name="Proc. Natl. Acad. Sci. U.S.A.">
        <title>Genome sequence of a serotype M3 strain of group A Streptococcus: phage-encoded toxins, the high-virulence phenotype, and clone emergence.</title>
        <authorList>
            <person name="Beres S.B."/>
            <person name="Sylva G.L."/>
            <person name="Barbian K.D."/>
            <person name="Lei B."/>
            <person name="Hoff J.S."/>
            <person name="Mammarella N.D."/>
            <person name="Liu M.-Y."/>
            <person name="Smoot J.C."/>
            <person name="Porcella S.F."/>
            <person name="Parkins L.D."/>
            <person name="Campbell D.S."/>
            <person name="Smith T.M."/>
            <person name="McCormick J.K."/>
            <person name="Leung D.Y.M."/>
            <person name="Schlievert P.M."/>
            <person name="Musser J.M."/>
        </authorList>
    </citation>
    <scope>NUCLEOTIDE SEQUENCE [LARGE SCALE GENOMIC DNA]</scope>
    <source>
        <strain>ATCC BAA-595 / MGAS315</strain>
    </source>
</reference>
<feature type="chain" id="PRO_0000126965" description="Phenylalanine--tRNA ligase beta subunit">
    <location>
        <begin position="1"/>
        <end position="801"/>
    </location>
</feature>
<feature type="domain" description="tRNA-binding" evidence="1">
    <location>
        <begin position="39"/>
        <end position="153"/>
    </location>
</feature>
<feature type="domain" description="B5" evidence="1">
    <location>
        <begin position="406"/>
        <end position="481"/>
    </location>
</feature>
<feature type="domain" description="FDX-ACB" evidence="1">
    <location>
        <begin position="708"/>
        <end position="801"/>
    </location>
</feature>
<feature type="binding site" evidence="1">
    <location>
        <position position="459"/>
    </location>
    <ligand>
        <name>Mg(2+)</name>
        <dbReference type="ChEBI" id="CHEBI:18420"/>
        <note>shared with alpha subunit</note>
    </ligand>
</feature>
<feature type="binding site" evidence="1">
    <location>
        <position position="465"/>
    </location>
    <ligand>
        <name>Mg(2+)</name>
        <dbReference type="ChEBI" id="CHEBI:18420"/>
        <note>shared with alpha subunit</note>
    </ligand>
</feature>
<feature type="binding site" evidence="1">
    <location>
        <position position="468"/>
    </location>
    <ligand>
        <name>Mg(2+)</name>
        <dbReference type="ChEBI" id="CHEBI:18420"/>
        <note>shared with alpha subunit</note>
    </ligand>
</feature>
<feature type="binding site" evidence="1">
    <location>
        <position position="469"/>
    </location>
    <ligand>
        <name>Mg(2+)</name>
        <dbReference type="ChEBI" id="CHEBI:18420"/>
        <note>shared with alpha subunit</note>
    </ligand>
</feature>
<evidence type="ECO:0000255" key="1">
    <source>
        <dbReference type="HAMAP-Rule" id="MF_00283"/>
    </source>
</evidence>
<evidence type="ECO:0000305" key="2"/>
<accession>P0DG52</accession>
<accession>Q878H7</accession>
<accession>Q8K820</accession>
<gene>
    <name evidence="1" type="primary">pheT</name>
    <name type="ordered locus">SpyM3_0507</name>
</gene>